<accession>Q54EH3</accession>
<dbReference type="EMBL" id="AAFI02000177">
    <property type="protein sequence ID" value="EAL61739.1"/>
    <property type="molecule type" value="Genomic_DNA"/>
</dbReference>
<dbReference type="RefSeq" id="XP_635267.1">
    <property type="nucleotide sequence ID" value="XM_630175.1"/>
</dbReference>
<dbReference type="SMR" id="Q54EH3"/>
<dbReference type="STRING" id="44689.Q54EH3"/>
<dbReference type="PaxDb" id="44689-DDB0233060"/>
<dbReference type="EnsemblProtists" id="EAL61739">
    <property type="protein sequence ID" value="EAL61739"/>
    <property type="gene ID" value="DDB_G0291510"/>
</dbReference>
<dbReference type="GeneID" id="8628211"/>
<dbReference type="KEGG" id="ddi:DDB_G0291510"/>
<dbReference type="dictyBase" id="DDB_G0291510"/>
<dbReference type="VEuPathDB" id="AmoebaDB:DDB_G0291510"/>
<dbReference type="eggNOG" id="KOG2063">
    <property type="taxonomic scope" value="Eukaryota"/>
</dbReference>
<dbReference type="eggNOG" id="KOG3686">
    <property type="taxonomic scope" value="Eukaryota"/>
</dbReference>
<dbReference type="HOGENOM" id="CLU_294309_0_0_1"/>
<dbReference type="InParanoid" id="Q54EH3"/>
<dbReference type="OMA" id="VENPEEC"/>
<dbReference type="Reactome" id="R-DDI-392517">
    <property type="pathway name" value="Rap1 signalling"/>
</dbReference>
<dbReference type="PRO" id="PR:Q54EH3"/>
<dbReference type="Proteomes" id="UP000002195">
    <property type="component" value="Chromosome 6"/>
</dbReference>
<dbReference type="GO" id="GO:0005737">
    <property type="term" value="C:cytoplasm"/>
    <property type="evidence" value="ECO:0000318"/>
    <property type="project" value="GO_Central"/>
</dbReference>
<dbReference type="GO" id="GO:0005096">
    <property type="term" value="F:GTPase activator activity"/>
    <property type="evidence" value="ECO:0000318"/>
    <property type="project" value="GO_Central"/>
</dbReference>
<dbReference type="GO" id="GO:0051056">
    <property type="term" value="P:regulation of small GTPase mediated signal transduction"/>
    <property type="evidence" value="ECO:0007669"/>
    <property type="project" value="InterPro"/>
</dbReference>
<dbReference type="Gene3D" id="3.40.50.11210">
    <property type="entry name" value="Rap/Ran-GAP"/>
    <property type="match status" value="1"/>
</dbReference>
<dbReference type="InterPro" id="IPR001180">
    <property type="entry name" value="CNH_dom"/>
</dbReference>
<dbReference type="InterPro" id="IPR035974">
    <property type="entry name" value="Rap/Ran-GAP_sf"/>
</dbReference>
<dbReference type="InterPro" id="IPR000331">
    <property type="entry name" value="Rap/Ran_GAP_dom"/>
</dbReference>
<dbReference type="InterPro" id="IPR050989">
    <property type="entry name" value="Rap1_Ran_GAP"/>
</dbReference>
<dbReference type="PANTHER" id="PTHR15711:SF67">
    <property type="entry name" value="GTPASE-ACTIVATING PROTEIN DDB_G0291510"/>
    <property type="match status" value="1"/>
</dbReference>
<dbReference type="PANTHER" id="PTHR15711">
    <property type="entry name" value="RAP GTPASE-ACTIVATING PROTEIN"/>
    <property type="match status" value="1"/>
</dbReference>
<dbReference type="Pfam" id="PF00780">
    <property type="entry name" value="CNH"/>
    <property type="match status" value="1"/>
</dbReference>
<dbReference type="Pfam" id="PF02145">
    <property type="entry name" value="Rap_GAP"/>
    <property type="match status" value="1"/>
</dbReference>
<dbReference type="SUPFAM" id="SSF111347">
    <property type="entry name" value="Rap/Ran-GAP"/>
    <property type="match status" value="1"/>
</dbReference>
<dbReference type="PROSITE" id="PS50219">
    <property type="entry name" value="CNH"/>
    <property type="match status" value="1"/>
</dbReference>
<dbReference type="PROSITE" id="PS50085">
    <property type="entry name" value="RAPGAP"/>
    <property type="match status" value="1"/>
</dbReference>
<sequence>MQTFSNINLVKPSRDWRVEKGDIDENNSGSINNRPLSPTLFSSNSSNNNNNNTTNNYIAVNGNLVLGVNGVGVGEQAQSLDIAVENPEECILWYYNYFLGKSHQNYLGTLDNGDVFGASIKKEEYAIEGEYSYKTIIWTLEGIERQWFQLKKHASTTPTDIIKKALPRLQIKKIKEIDSPDLLKDFKDLEQTQTEINYKFGLLLARPNQSSEDDFYNNVEHSPKWTEFLNLLGDTVVLNSFKGYRGGLDVNNNTTGTHSLYTSLKGYEVMFHVSTMLPHSKADSQQIERKRHLGNDIVIIIFYDCDPSDPIIPWDPSTVNSNFNHIFAVVRPADENNYHVEIVIKHGIAKFGPVLPTHSIFPKNSTFKEFLITKLVNAQRAALNSAPSFATKLKRTFKDQLESIYKKHSSSSSSLSFVPKRRSSSVSNINKGRELKVKDPKYGSGFFKLLSKDSNKTQVFDTEILFSKSLNEKINCLDVVESDENNSTLIVATEESIYLLKSNMITGEQLFQKIIVMKDVIRLTLVKPLKILLVLTGKGLCFFEMDTIFQQFNNLSTNSTIPSSYAIPIPTTPTTSNNNGGSGFFSSNNLSNGHTSLRWSKSGIIAAGLINNNNNSNSINSINSNNNNNINNSSINNNNGGNTNILAPSVFLSVNNNNNNSGNNIFNNNNNNNNNGGLNNSSENILTVIGEDSIKVKKIVGTKGCTVYGYTKGDNEGQEEDITLLYVGLKKTLLLYEWNKGEFVKSRELPLMDNIKTLCAIAPGMICVGIQKEFLLIDIFTQTIKELYKKSDSEPVKALSLDNEILLCFNNIGIFVDESGNKTRQFELKWGSTPSSLALVPSYVLGISGPLIEVRTLLNGNIIQSLPANISLSNDDCNLDNHYHHHEIINNCSAINIVNNQLSDNIENINNLNINNNNGNNNYNNNGNNSNGGNNNNNNNNNNGCNNSLINLDQETNNLMSENSNNGAENVYSFSTFNDIAHVDNGNIYVASSSKGLSCILRIKQNIQLNVLPSPSSSPLKPSLLLPPSPL</sequence>
<keyword id="KW-0343">GTPase activation</keyword>
<keyword id="KW-1185">Reference proteome</keyword>
<reference key="1">
    <citation type="journal article" date="2005" name="Nature">
        <title>The genome of the social amoeba Dictyostelium discoideum.</title>
        <authorList>
            <person name="Eichinger L."/>
            <person name="Pachebat J.A."/>
            <person name="Gloeckner G."/>
            <person name="Rajandream M.A."/>
            <person name="Sucgang R."/>
            <person name="Berriman M."/>
            <person name="Song J."/>
            <person name="Olsen R."/>
            <person name="Szafranski K."/>
            <person name="Xu Q."/>
            <person name="Tunggal B."/>
            <person name="Kummerfeld S."/>
            <person name="Madera M."/>
            <person name="Konfortov B.A."/>
            <person name="Rivero F."/>
            <person name="Bankier A.T."/>
            <person name="Lehmann R."/>
            <person name="Hamlin N."/>
            <person name="Davies R."/>
            <person name="Gaudet P."/>
            <person name="Fey P."/>
            <person name="Pilcher K."/>
            <person name="Chen G."/>
            <person name="Saunders D."/>
            <person name="Sodergren E.J."/>
            <person name="Davis P."/>
            <person name="Kerhornou A."/>
            <person name="Nie X."/>
            <person name="Hall N."/>
            <person name="Anjard C."/>
            <person name="Hemphill L."/>
            <person name="Bason N."/>
            <person name="Farbrother P."/>
            <person name="Desany B."/>
            <person name="Just E."/>
            <person name="Morio T."/>
            <person name="Rost R."/>
            <person name="Churcher C.M."/>
            <person name="Cooper J."/>
            <person name="Haydock S."/>
            <person name="van Driessche N."/>
            <person name="Cronin A."/>
            <person name="Goodhead I."/>
            <person name="Muzny D.M."/>
            <person name="Mourier T."/>
            <person name="Pain A."/>
            <person name="Lu M."/>
            <person name="Harper D."/>
            <person name="Lindsay R."/>
            <person name="Hauser H."/>
            <person name="James K.D."/>
            <person name="Quiles M."/>
            <person name="Madan Babu M."/>
            <person name="Saito T."/>
            <person name="Buchrieser C."/>
            <person name="Wardroper A."/>
            <person name="Felder M."/>
            <person name="Thangavelu M."/>
            <person name="Johnson D."/>
            <person name="Knights A."/>
            <person name="Loulseged H."/>
            <person name="Mungall K.L."/>
            <person name="Oliver K."/>
            <person name="Price C."/>
            <person name="Quail M.A."/>
            <person name="Urushihara H."/>
            <person name="Hernandez J."/>
            <person name="Rabbinowitsch E."/>
            <person name="Steffen D."/>
            <person name="Sanders M."/>
            <person name="Ma J."/>
            <person name="Kohara Y."/>
            <person name="Sharp S."/>
            <person name="Simmonds M.N."/>
            <person name="Spiegler S."/>
            <person name="Tivey A."/>
            <person name="Sugano S."/>
            <person name="White B."/>
            <person name="Walker D."/>
            <person name="Woodward J.R."/>
            <person name="Winckler T."/>
            <person name="Tanaka Y."/>
            <person name="Shaulsky G."/>
            <person name="Schleicher M."/>
            <person name="Weinstock G.M."/>
            <person name="Rosenthal A."/>
            <person name="Cox E.C."/>
            <person name="Chisholm R.L."/>
            <person name="Gibbs R.A."/>
            <person name="Loomis W.F."/>
            <person name="Platzer M."/>
            <person name="Kay R.R."/>
            <person name="Williams J.G."/>
            <person name="Dear P.H."/>
            <person name="Noegel A.A."/>
            <person name="Barrell B.G."/>
            <person name="Kuspa A."/>
        </authorList>
    </citation>
    <scope>NUCLEOTIDE SEQUENCE [LARGE SCALE GENOMIC DNA]</scope>
    <source>
        <strain>AX4</strain>
    </source>
</reference>
<proteinExistence type="predicted"/>
<name>Y1510_DICDI</name>
<feature type="chain" id="PRO_0000368231" description="GTPase-activating protein DDB_G0291510">
    <location>
        <begin position="1"/>
        <end position="1031"/>
    </location>
</feature>
<feature type="domain" description="Rap-GAP" evidence="1">
    <location>
        <begin position="186"/>
        <end position="404"/>
    </location>
</feature>
<feature type="domain" description="CNH" evidence="2">
    <location>
        <begin position="471"/>
        <end position="881"/>
    </location>
</feature>
<feature type="region of interest" description="Disordered" evidence="3">
    <location>
        <begin position="18"/>
        <end position="48"/>
    </location>
</feature>
<feature type="region of interest" description="Disordered" evidence="3">
    <location>
        <begin position="920"/>
        <end position="950"/>
    </location>
</feature>
<feature type="compositionally biased region" description="Polar residues" evidence="3">
    <location>
        <begin position="26"/>
        <end position="41"/>
    </location>
</feature>
<organism>
    <name type="scientific">Dictyostelium discoideum</name>
    <name type="common">Social amoeba</name>
    <dbReference type="NCBI Taxonomy" id="44689"/>
    <lineage>
        <taxon>Eukaryota</taxon>
        <taxon>Amoebozoa</taxon>
        <taxon>Evosea</taxon>
        <taxon>Eumycetozoa</taxon>
        <taxon>Dictyostelia</taxon>
        <taxon>Dictyosteliales</taxon>
        <taxon>Dictyosteliaceae</taxon>
        <taxon>Dictyostelium</taxon>
    </lineage>
</organism>
<gene>
    <name type="ORF">DDB_G0291510</name>
</gene>
<protein>
    <recommendedName>
        <fullName>GTPase-activating protein DDB_G0291510</fullName>
    </recommendedName>
</protein>
<evidence type="ECO:0000255" key="1">
    <source>
        <dbReference type="PROSITE-ProRule" id="PRU00165"/>
    </source>
</evidence>
<evidence type="ECO:0000255" key="2">
    <source>
        <dbReference type="PROSITE-ProRule" id="PRU00795"/>
    </source>
</evidence>
<evidence type="ECO:0000256" key="3">
    <source>
        <dbReference type="SAM" id="MobiDB-lite"/>
    </source>
</evidence>